<reference key="1">
    <citation type="submission" date="2008-10" db="EMBL/GenBank/DDBJ databases">
        <title>Complete sequence of Desulfovibrio vulgaris str. 'Miyazaki F'.</title>
        <authorList>
            <person name="Lucas S."/>
            <person name="Copeland A."/>
            <person name="Lapidus A."/>
            <person name="Glavina del Rio T."/>
            <person name="Dalin E."/>
            <person name="Tice H."/>
            <person name="Bruce D."/>
            <person name="Goodwin L."/>
            <person name="Pitluck S."/>
            <person name="Sims D."/>
            <person name="Brettin T."/>
            <person name="Detter J.C."/>
            <person name="Han C."/>
            <person name="Larimer F."/>
            <person name="Land M."/>
            <person name="Hauser L."/>
            <person name="Kyrpides N."/>
            <person name="Mikhailova N."/>
            <person name="Hazen T.C."/>
            <person name="Richardson P."/>
        </authorList>
    </citation>
    <scope>NUCLEOTIDE SEQUENCE [LARGE SCALE GENOMIC DNA]</scope>
    <source>
        <strain>DSM 19637 / Miyazaki F</strain>
    </source>
</reference>
<comment type="function">
    <text evidence="1">Catalyzes the formation of acetyl phosphate from acetate and ATP. Can also catalyze the reverse reaction.</text>
</comment>
<comment type="catalytic activity">
    <reaction evidence="1">
        <text>acetate + ATP = acetyl phosphate + ADP</text>
        <dbReference type="Rhea" id="RHEA:11352"/>
        <dbReference type="ChEBI" id="CHEBI:22191"/>
        <dbReference type="ChEBI" id="CHEBI:30089"/>
        <dbReference type="ChEBI" id="CHEBI:30616"/>
        <dbReference type="ChEBI" id="CHEBI:456216"/>
        <dbReference type="EC" id="2.7.2.1"/>
    </reaction>
</comment>
<comment type="cofactor">
    <cofactor evidence="1">
        <name>Mg(2+)</name>
        <dbReference type="ChEBI" id="CHEBI:18420"/>
    </cofactor>
    <cofactor evidence="1">
        <name>Mn(2+)</name>
        <dbReference type="ChEBI" id="CHEBI:29035"/>
    </cofactor>
    <text evidence="1">Mg(2+). Can also accept Mn(2+).</text>
</comment>
<comment type="pathway">
    <text evidence="1">Metabolic intermediate biosynthesis; acetyl-CoA biosynthesis; acetyl-CoA from acetate: step 1/2.</text>
</comment>
<comment type="subunit">
    <text evidence="1">Homodimer.</text>
</comment>
<comment type="subcellular location">
    <subcellularLocation>
        <location evidence="1">Cytoplasm</location>
    </subcellularLocation>
</comment>
<comment type="similarity">
    <text evidence="1">Belongs to the acetokinase family.</text>
</comment>
<sequence length="404" mass="44241">MNVLVINSGSSSIKYQLIDMTTEKALCSGLVERIGEGMGKLTHKIKPDTDAEEKIVLEQAFANHVEGMKKVVDLITDADKGVIADKGEIYAVGHRVLLGGEEIKQSVKIDEWAKGIIRDYIPLGPLHNPANLAGIEVAEELFPHAPSVGVFDTEFHQTMPKKAYLYPLPYDLYKTLRIRRYGFHGTSHRYITKKTAEFLGKPLDELNIITCHLGNGCSMAAVKNGRCVDTTMGITPLEGLMMGTRCGDIDPALVPFLMEKKGWSGAEIDTVMNKQSGLKGICGMNDMRDIHAAREKGDEMAELAFQMFVYRIRKYIGSFAVVVGKLDAIVFTAGIGENDDLVRAAVCKDMDILGIDIDEAVNAKRSGQARHIGKPGQRVPVLVVPTNEELEIAQTTVAVLNGKN</sequence>
<dbReference type="EC" id="2.7.2.1" evidence="1"/>
<dbReference type="EMBL" id="CP001197">
    <property type="protein sequence ID" value="ACL08809.1"/>
    <property type="molecule type" value="Genomic_DNA"/>
</dbReference>
<dbReference type="SMR" id="B8DMG5"/>
<dbReference type="STRING" id="883.DvMF_1865"/>
<dbReference type="KEGG" id="dvm:DvMF_1865"/>
<dbReference type="eggNOG" id="COG0282">
    <property type="taxonomic scope" value="Bacteria"/>
</dbReference>
<dbReference type="HOGENOM" id="CLU_020352_0_1_7"/>
<dbReference type="OrthoDB" id="9802453at2"/>
<dbReference type="UniPathway" id="UPA00340">
    <property type="reaction ID" value="UER00458"/>
</dbReference>
<dbReference type="GO" id="GO:0005737">
    <property type="term" value="C:cytoplasm"/>
    <property type="evidence" value="ECO:0007669"/>
    <property type="project" value="UniProtKB-SubCell"/>
</dbReference>
<dbReference type="GO" id="GO:0008776">
    <property type="term" value="F:acetate kinase activity"/>
    <property type="evidence" value="ECO:0007669"/>
    <property type="project" value="UniProtKB-UniRule"/>
</dbReference>
<dbReference type="GO" id="GO:0005524">
    <property type="term" value="F:ATP binding"/>
    <property type="evidence" value="ECO:0007669"/>
    <property type="project" value="UniProtKB-KW"/>
</dbReference>
<dbReference type="GO" id="GO:0000287">
    <property type="term" value="F:magnesium ion binding"/>
    <property type="evidence" value="ECO:0007669"/>
    <property type="project" value="UniProtKB-UniRule"/>
</dbReference>
<dbReference type="GO" id="GO:0006083">
    <property type="term" value="P:acetate metabolic process"/>
    <property type="evidence" value="ECO:0007669"/>
    <property type="project" value="TreeGrafter"/>
</dbReference>
<dbReference type="GO" id="GO:0006085">
    <property type="term" value="P:acetyl-CoA biosynthetic process"/>
    <property type="evidence" value="ECO:0007669"/>
    <property type="project" value="UniProtKB-UniRule"/>
</dbReference>
<dbReference type="CDD" id="cd24010">
    <property type="entry name" value="ASKHA_NBD_AcK_PK"/>
    <property type="match status" value="1"/>
</dbReference>
<dbReference type="Gene3D" id="3.30.420.40">
    <property type="match status" value="2"/>
</dbReference>
<dbReference type="HAMAP" id="MF_00020">
    <property type="entry name" value="Acetate_kinase"/>
    <property type="match status" value="1"/>
</dbReference>
<dbReference type="InterPro" id="IPR004372">
    <property type="entry name" value="Ac/propionate_kinase"/>
</dbReference>
<dbReference type="InterPro" id="IPR000890">
    <property type="entry name" value="Aliphatic_acid_kin_short-chain"/>
</dbReference>
<dbReference type="InterPro" id="IPR023865">
    <property type="entry name" value="Aliphatic_acid_kinase_CS"/>
</dbReference>
<dbReference type="InterPro" id="IPR043129">
    <property type="entry name" value="ATPase_NBD"/>
</dbReference>
<dbReference type="NCBIfam" id="TIGR00016">
    <property type="entry name" value="ackA"/>
    <property type="match status" value="1"/>
</dbReference>
<dbReference type="PANTHER" id="PTHR21060">
    <property type="entry name" value="ACETATE KINASE"/>
    <property type="match status" value="1"/>
</dbReference>
<dbReference type="PANTHER" id="PTHR21060:SF15">
    <property type="entry name" value="ACETATE KINASE-RELATED"/>
    <property type="match status" value="1"/>
</dbReference>
<dbReference type="Pfam" id="PF00871">
    <property type="entry name" value="Acetate_kinase"/>
    <property type="match status" value="1"/>
</dbReference>
<dbReference type="PIRSF" id="PIRSF000722">
    <property type="entry name" value="Acetate_prop_kin"/>
    <property type="match status" value="1"/>
</dbReference>
<dbReference type="PRINTS" id="PR00471">
    <property type="entry name" value="ACETATEKNASE"/>
</dbReference>
<dbReference type="SUPFAM" id="SSF53067">
    <property type="entry name" value="Actin-like ATPase domain"/>
    <property type="match status" value="2"/>
</dbReference>
<dbReference type="PROSITE" id="PS01075">
    <property type="entry name" value="ACETATE_KINASE_1"/>
    <property type="match status" value="1"/>
</dbReference>
<dbReference type="PROSITE" id="PS01076">
    <property type="entry name" value="ACETATE_KINASE_2"/>
    <property type="match status" value="1"/>
</dbReference>
<evidence type="ECO:0000255" key="1">
    <source>
        <dbReference type="HAMAP-Rule" id="MF_00020"/>
    </source>
</evidence>
<protein>
    <recommendedName>
        <fullName evidence="1">Acetate kinase</fullName>
        <ecNumber evidence="1">2.7.2.1</ecNumber>
    </recommendedName>
    <alternativeName>
        <fullName evidence="1">Acetokinase</fullName>
    </alternativeName>
</protein>
<organism>
    <name type="scientific">Nitratidesulfovibrio vulgaris (strain DSM 19637 / Miyazaki F)</name>
    <name type="common">Desulfovibrio vulgaris</name>
    <dbReference type="NCBI Taxonomy" id="883"/>
    <lineage>
        <taxon>Bacteria</taxon>
        <taxon>Pseudomonadati</taxon>
        <taxon>Thermodesulfobacteriota</taxon>
        <taxon>Desulfovibrionia</taxon>
        <taxon>Desulfovibrionales</taxon>
        <taxon>Desulfovibrionaceae</taxon>
        <taxon>Nitratidesulfovibrio</taxon>
    </lineage>
</organism>
<keyword id="KW-0067">ATP-binding</keyword>
<keyword id="KW-0963">Cytoplasm</keyword>
<keyword id="KW-0418">Kinase</keyword>
<keyword id="KW-0460">Magnesium</keyword>
<keyword id="KW-0479">Metal-binding</keyword>
<keyword id="KW-0547">Nucleotide-binding</keyword>
<keyword id="KW-0808">Transferase</keyword>
<name>ACKA_NITV9</name>
<gene>
    <name evidence="1" type="primary">ackA</name>
    <name type="ordered locus">DvMF_1865</name>
</gene>
<feature type="chain" id="PRO_1000116389" description="Acetate kinase">
    <location>
        <begin position="1"/>
        <end position="404"/>
    </location>
</feature>
<feature type="active site" description="Proton donor/acceptor" evidence="1">
    <location>
        <position position="152"/>
    </location>
</feature>
<feature type="binding site" evidence="1">
    <location>
        <position position="7"/>
    </location>
    <ligand>
        <name>Mg(2+)</name>
        <dbReference type="ChEBI" id="CHEBI:18420"/>
    </ligand>
</feature>
<feature type="binding site" evidence="1">
    <location>
        <position position="14"/>
    </location>
    <ligand>
        <name>ATP</name>
        <dbReference type="ChEBI" id="CHEBI:30616"/>
    </ligand>
</feature>
<feature type="binding site" evidence="1">
    <location>
        <position position="95"/>
    </location>
    <ligand>
        <name>substrate</name>
    </ligand>
</feature>
<feature type="binding site" evidence="1">
    <location>
        <begin position="212"/>
        <end position="216"/>
    </location>
    <ligand>
        <name>ATP</name>
        <dbReference type="ChEBI" id="CHEBI:30616"/>
    </ligand>
</feature>
<feature type="binding site" evidence="1">
    <location>
        <begin position="286"/>
        <end position="288"/>
    </location>
    <ligand>
        <name>ATP</name>
        <dbReference type="ChEBI" id="CHEBI:30616"/>
    </ligand>
</feature>
<feature type="binding site" evidence="1">
    <location>
        <begin position="334"/>
        <end position="338"/>
    </location>
    <ligand>
        <name>ATP</name>
        <dbReference type="ChEBI" id="CHEBI:30616"/>
    </ligand>
</feature>
<feature type="binding site" evidence="1">
    <location>
        <position position="388"/>
    </location>
    <ligand>
        <name>Mg(2+)</name>
        <dbReference type="ChEBI" id="CHEBI:18420"/>
    </ligand>
</feature>
<feature type="site" description="Transition state stabilizer" evidence="1">
    <location>
        <position position="184"/>
    </location>
</feature>
<feature type="site" description="Transition state stabilizer" evidence="1">
    <location>
        <position position="245"/>
    </location>
</feature>
<accession>B8DMG5</accession>
<proteinExistence type="inferred from homology"/>